<dbReference type="EMBL" id="AB009056">
    <property type="protein sequence ID" value="BAB08728.1"/>
    <property type="molecule type" value="Genomic_DNA"/>
</dbReference>
<dbReference type="EMBL" id="CP002688">
    <property type="protein sequence ID" value="AED93250.1"/>
    <property type="molecule type" value="Genomic_DNA"/>
</dbReference>
<dbReference type="EMBL" id="DQ446978">
    <property type="protein sequence ID" value="ABE65557.1"/>
    <property type="molecule type" value="Genomic_DNA"/>
</dbReference>
<dbReference type="EMBL" id="AB493756">
    <property type="protein sequence ID" value="BAH30594.1"/>
    <property type="molecule type" value="Genomic_DNA"/>
</dbReference>
<dbReference type="RefSeq" id="NP_197793.1">
    <property type="nucleotide sequence ID" value="NM_122310.1"/>
</dbReference>
<dbReference type="BioGRID" id="17745">
    <property type="interactions" value="5"/>
</dbReference>
<dbReference type="IntAct" id="Q9FLV7">
    <property type="interactions" value="5"/>
</dbReference>
<dbReference type="PaxDb" id="3702-AT5G24050.1"/>
<dbReference type="EnsemblPlants" id="AT5G24050.1">
    <property type="protein sequence ID" value="AT5G24050.1"/>
    <property type="gene ID" value="AT5G24050"/>
</dbReference>
<dbReference type="GeneID" id="832470"/>
<dbReference type="Gramene" id="AT5G24050.1">
    <property type="protein sequence ID" value="AT5G24050.1"/>
    <property type="gene ID" value="AT5G24050"/>
</dbReference>
<dbReference type="KEGG" id="ath:AT5G24050"/>
<dbReference type="Araport" id="AT5G24050"/>
<dbReference type="TAIR" id="AT5G24050"/>
<dbReference type="eggNOG" id="ENOG502S4WY">
    <property type="taxonomic scope" value="Eukaryota"/>
</dbReference>
<dbReference type="HOGENOM" id="CLU_072178_0_0_1"/>
<dbReference type="InParanoid" id="Q9FLV7"/>
<dbReference type="OMA" id="WMIQLMR"/>
<dbReference type="PhylomeDB" id="Q9FLV7"/>
<dbReference type="PRO" id="PR:Q9FLV7"/>
<dbReference type="Proteomes" id="UP000006548">
    <property type="component" value="Chromosome 5"/>
</dbReference>
<dbReference type="ExpressionAtlas" id="Q9FLV7">
    <property type="expression patterns" value="baseline and differential"/>
</dbReference>
<dbReference type="GO" id="GO:0005634">
    <property type="term" value="C:nucleus"/>
    <property type="evidence" value="ECO:0007669"/>
    <property type="project" value="UniProtKB-SubCell"/>
</dbReference>
<dbReference type="GO" id="GO:0003677">
    <property type="term" value="F:DNA binding"/>
    <property type="evidence" value="ECO:0007669"/>
    <property type="project" value="UniProtKB-KW"/>
</dbReference>
<dbReference type="CDD" id="cd10017">
    <property type="entry name" value="B3_DNA"/>
    <property type="match status" value="1"/>
</dbReference>
<dbReference type="Gene3D" id="2.40.330.10">
    <property type="entry name" value="DNA-binding pseudobarrel domain"/>
    <property type="match status" value="1"/>
</dbReference>
<dbReference type="InterPro" id="IPR005508">
    <property type="entry name" value="At2g31720-like"/>
</dbReference>
<dbReference type="InterPro" id="IPR003340">
    <property type="entry name" value="B3_DNA-bd"/>
</dbReference>
<dbReference type="InterPro" id="IPR015300">
    <property type="entry name" value="DNA-bd_pseudobarrel_sf"/>
</dbReference>
<dbReference type="PANTHER" id="PTHR31541">
    <property type="entry name" value="B3 DOMAIN PLANT PROTEIN-RELATED"/>
    <property type="match status" value="1"/>
</dbReference>
<dbReference type="PANTHER" id="PTHR31541:SF34">
    <property type="entry name" value="TF-B3 DOMAIN-CONTAINING PROTEIN"/>
    <property type="match status" value="1"/>
</dbReference>
<dbReference type="Pfam" id="PF03754">
    <property type="entry name" value="At2g31720-like"/>
    <property type="match status" value="1"/>
</dbReference>
<dbReference type="SUPFAM" id="SSF101936">
    <property type="entry name" value="DNA-binding pseudobarrel domain"/>
    <property type="match status" value="1"/>
</dbReference>
<dbReference type="PROSITE" id="PS50863">
    <property type="entry name" value="B3"/>
    <property type="match status" value="1"/>
</dbReference>
<protein>
    <recommendedName>
        <fullName>B3 domain-containing protein At5g24050</fullName>
    </recommendedName>
</protein>
<organism>
    <name type="scientific">Arabidopsis thaliana</name>
    <name type="common">Mouse-ear cress</name>
    <dbReference type="NCBI Taxonomy" id="3702"/>
    <lineage>
        <taxon>Eukaryota</taxon>
        <taxon>Viridiplantae</taxon>
        <taxon>Streptophyta</taxon>
        <taxon>Embryophyta</taxon>
        <taxon>Tracheophyta</taxon>
        <taxon>Spermatophyta</taxon>
        <taxon>Magnoliopsida</taxon>
        <taxon>eudicotyledons</taxon>
        <taxon>Gunneridae</taxon>
        <taxon>Pentapetalae</taxon>
        <taxon>rosids</taxon>
        <taxon>malvids</taxon>
        <taxon>Brassicales</taxon>
        <taxon>Brassicaceae</taxon>
        <taxon>Camelineae</taxon>
        <taxon>Arabidopsis</taxon>
    </lineage>
</organism>
<feature type="chain" id="PRO_0000375153" description="B3 domain-containing protein At5g24050">
    <location>
        <begin position="1"/>
        <end position="349"/>
    </location>
</feature>
<feature type="DNA-binding region" description="TF-B3" evidence="1">
    <location>
        <begin position="240"/>
        <end position="341"/>
    </location>
</feature>
<comment type="interaction">
    <interactant intactId="EBI-15197201">
        <id>Q9FLV7</id>
    </interactant>
    <interactant intactId="EBI-15191755">
        <id>O04541</id>
        <label>F20P5.23</label>
    </interactant>
    <organismsDiffer>false</organismsDiffer>
    <experiments>3</experiments>
</comment>
<comment type="subcellular location">
    <subcellularLocation>
        <location evidence="1">Nucleus</location>
    </subcellularLocation>
</comment>
<name>Y5405_ARATH</name>
<keyword id="KW-0238">DNA-binding</keyword>
<keyword id="KW-0539">Nucleus</keyword>
<keyword id="KW-1185">Reference proteome</keyword>
<keyword id="KW-0804">Transcription</keyword>
<keyword id="KW-0805">Transcription regulation</keyword>
<accession>Q9FLV7</accession>
<sequence>MTSIYHDDDDHLTASGKDLWSNFCVLVDAAVMLYEEEEEEQRRKIVSEEEEEFQKRIFCLFPRKTRSSLVKRQQNLIRVSTSSSLIDLNQFPTDSEIEDPQNHLQGLSSSCFIAANSETKTLQNPSSEPCSSLGLFGHKTAEYQKTETKDPPNPNFPCTMSLCLMENTSRKRRAVEQRKRSGGVKKANVAPFSQTARETPEWLVKVMTNMKEAKDAKLIFEKTLFVTDVNPTKNRLSMPFNNLLRNDFLTSVESIIINEDINNNNKIGVGAILVDQRCKKWGVMLKRWEMKKESGKGSWSYNLICGWNDIVEANRLKEGDNITLWSFRCCGILCFAMEQSSSSLALCLC</sequence>
<gene>
    <name type="ordered locus">At5g24050</name>
    <name type="ORF">MZF18.7</name>
</gene>
<proteinExistence type="evidence at transcript level"/>
<evidence type="ECO:0000255" key="1">
    <source>
        <dbReference type="PROSITE-ProRule" id="PRU00326"/>
    </source>
</evidence>
<reference key="1">
    <citation type="journal article" date="1998" name="DNA Res.">
        <title>Structural analysis of Arabidopsis thaliana chromosome 5. IV. Sequence features of the regions of 1,456,315 bp covered by nineteen physically assigned P1 and TAC clones.</title>
        <authorList>
            <person name="Sato S."/>
            <person name="Kaneko T."/>
            <person name="Kotani H."/>
            <person name="Nakamura Y."/>
            <person name="Asamizu E."/>
            <person name="Miyajima N."/>
            <person name="Tabata S."/>
        </authorList>
    </citation>
    <scope>NUCLEOTIDE SEQUENCE [LARGE SCALE GENOMIC DNA]</scope>
    <source>
        <strain>cv. Columbia</strain>
    </source>
</reference>
<reference key="2">
    <citation type="journal article" date="2017" name="Plant J.">
        <title>Araport11: a complete reannotation of the Arabidopsis thaliana reference genome.</title>
        <authorList>
            <person name="Cheng C.Y."/>
            <person name="Krishnakumar V."/>
            <person name="Chan A.P."/>
            <person name="Thibaud-Nissen F."/>
            <person name="Schobel S."/>
            <person name="Town C.D."/>
        </authorList>
    </citation>
    <scope>GENOME REANNOTATION</scope>
    <source>
        <strain>cv. Columbia</strain>
    </source>
</reference>
<reference key="3">
    <citation type="journal article" date="2006" name="Plant Biotechnol. J.">
        <title>Simultaneous high-throughput recombinational cloning of open reading frames in closed and open configurations.</title>
        <authorList>
            <person name="Underwood B.A."/>
            <person name="Vanderhaeghen R."/>
            <person name="Whitford R."/>
            <person name="Town C.D."/>
            <person name="Hilson P."/>
        </authorList>
    </citation>
    <scope>NUCLEOTIDE SEQUENCE [LARGE SCALE GENOMIC DNA]</scope>
    <source>
        <strain>cv. Columbia</strain>
    </source>
</reference>
<reference key="4">
    <citation type="submission" date="2009-03" db="EMBL/GenBank/DDBJ databases">
        <title>ORF cloning and analysis of Arabidopsis transcription factor genes.</title>
        <authorList>
            <person name="Fujita M."/>
            <person name="Mizukado S."/>
            <person name="Seki M."/>
            <person name="Shinozaki K."/>
            <person name="Mitsuda N."/>
            <person name="Takiguchi Y."/>
            <person name="Takagi M."/>
        </authorList>
    </citation>
    <scope>NUCLEOTIDE SEQUENCE [LARGE SCALE GENOMIC DNA]</scope>
</reference>
<reference key="5">
    <citation type="journal article" date="2008" name="Trends Plant Sci.">
        <title>The plant B3 superfamily.</title>
        <authorList>
            <person name="Swaminathan K."/>
            <person name="Peterson K."/>
            <person name="Jack T."/>
        </authorList>
    </citation>
    <scope>GENE FAMILY</scope>
</reference>